<reference key="1">
    <citation type="journal article" date="2004" name="Plant Physiol.">
        <title>The Arabidopsis cyclophilin gene family.</title>
        <authorList>
            <person name="Romano P.G.N."/>
            <person name="Horton P."/>
            <person name="Gray J.E."/>
        </authorList>
    </citation>
    <scope>NUCLEOTIDE SEQUENCE [MRNA] (ISOFORM 1)</scope>
    <scope>TISSUE SPECIFICITY</scope>
    <scope>GENE FAMILY</scope>
    <scope>NOMENCLATURE</scope>
</reference>
<reference key="2">
    <citation type="journal article" date="1999" name="Nature">
        <title>Sequence and analysis of chromosome 4 of the plant Arabidopsis thaliana.</title>
        <authorList>
            <person name="Mayer K.F.X."/>
            <person name="Schueller C."/>
            <person name="Wambutt R."/>
            <person name="Murphy G."/>
            <person name="Volckaert G."/>
            <person name="Pohl T."/>
            <person name="Duesterhoeft A."/>
            <person name="Stiekema W."/>
            <person name="Entian K.-D."/>
            <person name="Terryn N."/>
            <person name="Harris B."/>
            <person name="Ansorge W."/>
            <person name="Brandt P."/>
            <person name="Grivell L.A."/>
            <person name="Rieger M."/>
            <person name="Weichselgartner M."/>
            <person name="de Simone V."/>
            <person name="Obermaier B."/>
            <person name="Mache R."/>
            <person name="Mueller M."/>
            <person name="Kreis M."/>
            <person name="Delseny M."/>
            <person name="Puigdomenech P."/>
            <person name="Watson M."/>
            <person name="Schmidtheini T."/>
            <person name="Reichert B."/>
            <person name="Portetelle D."/>
            <person name="Perez-Alonso M."/>
            <person name="Boutry M."/>
            <person name="Bancroft I."/>
            <person name="Vos P."/>
            <person name="Hoheisel J."/>
            <person name="Zimmermann W."/>
            <person name="Wedler H."/>
            <person name="Ridley P."/>
            <person name="Langham S.-A."/>
            <person name="McCullagh B."/>
            <person name="Bilham L."/>
            <person name="Robben J."/>
            <person name="van der Schueren J."/>
            <person name="Grymonprez B."/>
            <person name="Chuang Y.-J."/>
            <person name="Vandenbussche F."/>
            <person name="Braeken M."/>
            <person name="Weltjens I."/>
            <person name="Voet M."/>
            <person name="Bastiaens I."/>
            <person name="Aert R."/>
            <person name="Defoor E."/>
            <person name="Weitzenegger T."/>
            <person name="Bothe G."/>
            <person name="Ramsperger U."/>
            <person name="Hilbert H."/>
            <person name="Braun M."/>
            <person name="Holzer E."/>
            <person name="Brandt A."/>
            <person name="Peters S."/>
            <person name="van Staveren M."/>
            <person name="Dirkse W."/>
            <person name="Mooijman P."/>
            <person name="Klein Lankhorst R."/>
            <person name="Rose M."/>
            <person name="Hauf J."/>
            <person name="Koetter P."/>
            <person name="Berneiser S."/>
            <person name="Hempel S."/>
            <person name="Feldpausch M."/>
            <person name="Lamberth S."/>
            <person name="Van den Daele H."/>
            <person name="De Keyser A."/>
            <person name="Buysshaert C."/>
            <person name="Gielen J."/>
            <person name="Villarroel R."/>
            <person name="De Clercq R."/>
            <person name="van Montagu M."/>
            <person name="Rogers J."/>
            <person name="Cronin A."/>
            <person name="Quail M.A."/>
            <person name="Bray-Allen S."/>
            <person name="Clark L."/>
            <person name="Doggett J."/>
            <person name="Hall S."/>
            <person name="Kay M."/>
            <person name="Lennard N."/>
            <person name="McLay K."/>
            <person name="Mayes R."/>
            <person name="Pettett A."/>
            <person name="Rajandream M.A."/>
            <person name="Lyne M."/>
            <person name="Benes V."/>
            <person name="Rechmann S."/>
            <person name="Borkova D."/>
            <person name="Bloecker H."/>
            <person name="Scharfe M."/>
            <person name="Grimm M."/>
            <person name="Loehnert T.-H."/>
            <person name="Dose S."/>
            <person name="de Haan M."/>
            <person name="Maarse A.C."/>
            <person name="Schaefer M."/>
            <person name="Mueller-Auer S."/>
            <person name="Gabel C."/>
            <person name="Fuchs M."/>
            <person name="Fartmann B."/>
            <person name="Granderath K."/>
            <person name="Dauner D."/>
            <person name="Herzl A."/>
            <person name="Neumann S."/>
            <person name="Argiriou A."/>
            <person name="Vitale D."/>
            <person name="Liguori R."/>
            <person name="Piravandi E."/>
            <person name="Massenet O."/>
            <person name="Quigley F."/>
            <person name="Clabauld G."/>
            <person name="Muendlein A."/>
            <person name="Felber R."/>
            <person name="Schnabl S."/>
            <person name="Hiller R."/>
            <person name="Schmidt W."/>
            <person name="Lecharny A."/>
            <person name="Aubourg S."/>
            <person name="Chefdor F."/>
            <person name="Cooke R."/>
            <person name="Berger C."/>
            <person name="Monfort A."/>
            <person name="Casacuberta E."/>
            <person name="Gibbons T."/>
            <person name="Weber N."/>
            <person name="Vandenbol M."/>
            <person name="Bargues M."/>
            <person name="Terol J."/>
            <person name="Torres A."/>
            <person name="Perez-Perez A."/>
            <person name="Purnelle B."/>
            <person name="Bent E."/>
            <person name="Johnson S."/>
            <person name="Tacon D."/>
            <person name="Jesse T."/>
            <person name="Heijnen L."/>
            <person name="Schwarz S."/>
            <person name="Scholler P."/>
            <person name="Heber S."/>
            <person name="Francs P."/>
            <person name="Bielke C."/>
            <person name="Frishman D."/>
            <person name="Haase D."/>
            <person name="Lemcke K."/>
            <person name="Mewes H.-W."/>
            <person name="Stocker S."/>
            <person name="Zaccaria P."/>
            <person name="Bevan M."/>
            <person name="Wilson R.K."/>
            <person name="de la Bastide M."/>
            <person name="Habermann K."/>
            <person name="Parnell L."/>
            <person name="Dedhia N."/>
            <person name="Gnoj L."/>
            <person name="Schutz K."/>
            <person name="Huang E."/>
            <person name="Spiegel L."/>
            <person name="Sekhon M."/>
            <person name="Murray J."/>
            <person name="Sheet P."/>
            <person name="Cordes M."/>
            <person name="Abu-Threideh J."/>
            <person name="Stoneking T."/>
            <person name="Kalicki J."/>
            <person name="Graves T."/>
            <person name="Harmon G."/>
            <person name="Edwards J."/>
            <person name="Latreille P."/>
            <person name="Courtney L."/>
            <person name="Cloud J."/>
            <person name="Abbott A."/>
            <person name="Scott K."/>
            <person name="Johnson D."/>
            <person name="Minx P."/>
            <person name="Bentley D."/>
            <person name="Fulton B."/>
            <person name="Miller N."/>
            <person name="Greco T."/>
            <person name="Kemp K."/>
            <person name="Kramer J."/>
            <person name="Fulton L."/>
            <person name="Mardis E."/>
            <person name="Dante M."/>
            <person name="Pepin K."/>
            <person name="Hillier L.W."/>
            <person name="Nelson J."/>
            <person name="Spieth J."/>
            <person name="Ryan E."/>
            <person name="Andrews S."/>
            <person name="Geisel C."/>
            <person name="Layman D."/>
            <person name="Du H."/>
            <person name="Ali J."/>
            <person name="Berghoff A."/>
            <person name="Jones K."/>
            <person name="Drone K."/>
            <person name="Cotton M."/>
            <person name="Joshu C."/>
            <person name="Antonoiu B."/>
            <person name="Zidanic M."/>
            <person name="Strong C."/>
            <person name="Sun H."/>
            <person name="Lamar B."/>
            <person name="Yordan C."/>
            <person name="Ma P."/>
            <person name="Zhong J."/>
            <person name="Preston R."/>
            <person name="Vil D."/>
            <person name="Shekher M."/>
            <person name="Matero A."/>
            <person name="Shah R."/>
            <person name="Swaby I.K."/>
            <person name="O'Shaughnessy A."/>
            <person name="Rodriguez M."/>
            <person name="Hoffman J."/>
            <person name="Till S."/>
            <person name="Granat S."/>
            <person name="Shohdy N."/>
            <person name="Hasegawa A."/>
            <person name="Hameed A."/>
            <person name="Lodhi M."/>
            <person name="Johnson A."/>
            <person name="Chen E."/>
            <person name="Marra M.A."/>
            <person name="Martienssen R."/>
            <person name="McCombie W.R."/>
        </authorList>
    </citation>
    <scope>NUCLEOTIDE SEQUENCE [LARGE SCALE GENOMIC DNA]</scope>
    <source>
        <strain>cv. Columbia</strain>
    </source>
</reference>
<reference key="3">
    <citation type="journal article" date="2017" name="Plant J.">
        <title>Araport11: a complete reannotation of the Arabidopsis thaliana reference genome.</title>
        <authorList>
            <person name="Cheng C.Y."/>
            <person name="Krishnakumar V."/>
            <person name="Chan A.P."/>
            <person name="Thibaud-Nissen F."/>
            <person name="Schobel S."/>
            <person name="Town C.D."/>
        </authorList>
    </citation>
    <scope>GENOME REANNOTATION</scope>
    <source>
        <strain>cv. Columbia</strain>
    </source>
</reference>
<reference key="4">
    <citation type="submission" date="2006-05" db="EMBL/GenBank/DDBJ databases">
        <title>Arabidopsis ORF clones.</title>
        <authorList>
            <person name="Shinn P."/>
            <person name="Chen H."/>
            <person name="Kim C.J."/>
            <person name="Quinitio C."/>
            <person name="Ecker J.R."/>
        </authorList>
    </citation>
    <scope>NUCLEOTIDE SEQUENCE [LARGE SCALE MRNA] (ISOFORM 1)</scope>
</reference>
<reference key="5">
    <citation type="submission" date="2006-07" db="EMBL/GenBank/DDBJ databases">
        <title>Large-scale analysis of RIKEN Arabidopsis full-length (RAFL) cDNAs.</title>
        <authorList>
            <person name="Totoki Y."/>
            <person name="Seki M."/>
            <person name="Ishida J."/>
            <person name="Nakajima M."/>
            <person name="Enju A."/>
            <person name="Kamiya A."/>
            <person name="Narusaka M."/>
            <person name="Shin-i T."/>
            <person name="Nakagawa M."/>
            <person name="Sakamoto N."/>
            <person name="Oishi K."/>
            <person name="Kohara Y."/>
            <person name="Kobayashi M."/>
            <person name="Toyoda A."/>
            <person name="Sakaki Y."/>
            <person name="Sakurai T."/>
            <person name="Iida K."/>
            <person name="Akiyama K."/>
            <person name="Satou M."/>
            <person name="Toyoda T."/>
            <person name="Konagaya A."/>
            <person name="Carninci P."/>
            <person name="Kawai J."/>
            <person name="Hayashizaki Y."/>
            <person name="Shinozaki K."/>
        </authorList>
    </citation>
    <scope>NUCLEOTIDE SEQUENCE [LARGE SCALE MRNA] (ISOFORM 2)</scope>
    <source>
        <strain>cv. Columbia</strain>
    </source>
</reference>
<reference key="6">
    <citation type="journal article" date="2004" name="Plant Physiol.">
        <title>Immunophilins and parvulins. Superfamily of peptidyl prolyl isomerases in Arabidopsis.</title>
        <authorList>
            <person name="He Z."/>
            <person name="Li L."/>
            <person name="Luan S."/>
        </authorList>
    </citation>
    <scope>TISSUE SPECIFICITY</scope>
    <scope>GENE FAMILY</scope>
    <scope>NOMENCLATURE</scope>
</reference>
<reference key="7">
    <citation type="journal article" date="2012" name="Mol. Cell. Proteomics">
        <title>Comparative large-scale characterisation of plant vs. mammal proteins reveals similar and idiosyncratic N-alpha acetylation features.</title>
        <authorList>
            <person name="Bienvenut W.V."/>
            <person name="Sumpton D."/>
            <person name="Martinez A."/>
            <person name="Lilla S."/>
            <person name="Espagne C."/>
            <person name="Meinnel T."/>
            <person name="Giglione C."/>
        </authorList>
    </citation>
    <scope>ACETYLATION [LARGE SCALE ANALYSIS] AT SER-2</scope>
    <scope>CLEAVAGE OF INITIATOR METHIONINE [LARGE SCALE ANALYSIS]</scope>
    <scope>IDENTIFICATION BY MASS SPECTROMETRY [LARGE SCALE ANALYSIS]</scope>
</reference>
<reference key="8">
    <citation type="journal article" date="2014" name="Gene">
        <title>Characterization of three Arabidopsis thaliana immunophilin genes involved in the plant defense response against Pseudomonas syringae.</title>
        <authorList>
            <person name="Pogorelko G.V."/>
            <person name="Mokryakova M."/>
            <person name="Fursova O.V."/>
            <person name="Abdeeva I."/>
            <person name="Piruzian E.S."/>
            <person name="Bruskin S.A."/>
        </authorList>
    </citation>
    <scope>FUNCTION</scope>
    <scope>DISRUPTION PHENOTYPE</scope>
    <scope>INDUCTION BY PATHOGEN</scope>
    <scope>SUBCELLULAR LOCATION</scope>
</reference>
<proteinExistence type="evidence at protein level"/>
<accession>Q6Q152</accession>
<accession>O82646</accession>
<accession>Q0WU97</accession>
<evidence type="ECO:0000250" key="1"/>
<evidence type="ECO:0000255" key="2"/>
<evidence type="ECO:0000255" key="3">
    <source>
        <dbReference type="PROSITE-ProRule" id="PRU00156"/>
    </source>
</evidence>
<evidence type="ECO:0000256" key="4">
    <source>
        <dbReference type="SAM" id="MobiDB-lite"/>
    </source>
</evidence>
<evidence type="ECO:0000269" key="5">
    <source>
    </source>
</evidence>
<evidence type="ECO:0000269" key="6">
    <source>
    </source>
</evidence>
<evidence type="ECO:0000269" key="7">
    <source>
    </source>
</evidence>
<evidence type="ECO:0000303" key="8">
    <source ref="5"/>
</evidence>
<evidence type="ECO:0000305" key="9"/>
<evidence type="ECO:0007744" key="10">
    <source>
    </source>
</evidence>
<gene>
    <name type="primary">CYP57</name>
    <name type="ordered locus">At4g33060</name>
    <name type="ORF">F4I10.3</name>
</gene>
<organism>
    <name type="scientific">Arabidopsis thaliana</name>
    <name type="common">Mouse-ear cress</name>
    <dbReference type="NCBI Taxonomy" id="3702"/>
    <lineage>
        <taxon>Eukaryota</taxon>
        <taxon>Viridiplantae</taxon>
        <taxon>Streptophyta</taxon>
        <taxon>Embryophyta</taxon>
        <taxon>Tracheophyta</taxon>
        <taxon>Spermatophyta</taxon>
        <taxon>Magnoliopsida</taxon>
        <taxon>eudicotyledons</taxon>
        <taxon>Gunneridae</taxon>
        <taxon>Pentapetalae</taxon>
        <taxon>rosids</taxon>
        <taxon>malvids</taxon>
        <taxon>Brassicales</taxon>
        <taxon>Brassicaceae</taxon>
        <taxon>Camelineae</taxon>
        <taxon>Arabidopsis</taxon>
    </lineage>
</organism>
<dbReference type="EC" id="5.2.1.8"/>
<dbReference type="EMBL" id="AY568525">
    <property type="protein sequence ID" value="AAS75308.1"/>
    <property type="molecule type" value="mRNA"/>
</dbReference>
<dbReference type="EMBL" id="AL031804">
    <property type="protein sequence ID" value="CAA21215.1"/>
    <property type="status" value="ALT_SEQ"/>
    <property type="molecule type" value="Genomic_DNA"/>
</dbReference>
<dbReference type="EMBL" id="AL161582">
    <property type="protein sequence ID" value="CAB80023.1"/>
    <property type="status" value="ALT_SEQ"/>
    <property type="molecule type" value="Genomic_DNA"/>
</dbReference>
<dbReference type="EMBL" id="CP002687">
    <property type="protein sequence ID" value="AEE86168.1"/>
    <property type="molecule type" value="Genomic_DNA"/>
</dbReference>
<dbReference type="EMBL" id="BT025329">
    <property type="protein sequence ID" value="ABF57285.1"/>
    <property type="molecule type" value="mRNA"/>
</dbReference>
<dbReference type="EMBL" id="AK227277">
    <property type="protein sequence ID" value="BAE99301.1"/>
    <property type="molecule type" value="mRNA"/>
</dbReference>
<dbReference type="PIR" id="T05314">
    <property type="entry name" value="T05314"/>
</dbReference>
<dbReference type="RefSeq" id="NP_195032.2">
    <molecule id="Q6Q152-1"/>
    <property type="nucleotide sequence ID" value="NM_119460.5"/>
</dbReference>
<dbReference type="SMR" id="Q6Q152"/>
<dbReference type="BioGRID" id="14728">
    <property type="interactions" value="2"/>
</dbReference>
<dbReference type="FunCoup" id="Q6Q152">
    <property type="interactions" value="3589"/>
</dbReference>
<dbReference type="STRING" id="3702.Q6Q152"/>
<dbReference type="iPTMnet" id="Q6Q152"/>
<dbReference type="PaxDb" id="3702-AT4G33060.1"/>
<dbReference type="ProteomicsDB" id="224399">
    <molecule id="Q6Q152-1"/>
</dbReference>
<dbReference type="EnsemblPlants" id="AT4G33060.1">
    <molecule id="Q6Q152-1"/>
    <property type="protein sequence ID" value="AT4G33060.1"/>
    <property type="gene ID" value="AT4G33060"/>
</dbReference>
<dbReference type="GeneID" id="829443"/>
<dbReference type="Gramene" id="AT4G33060.1">
    <molecule id="Q6Q152-1"/>
    <property type="protein sequence ID" value="AT4G33060.1"/>
    <property type="gene ID" value="AT4G33060"/>
</dbReference>
<dbReference type="KEGG" id="ath:AT4G33060"/>
<dbReference type="Araport" id="AT4G33060"/>
<dbReference type="TAIR" id="AT4G33060">
    <property type="gene designation" value="CYP57"/>
</dbReference>
<dbReference type="eggNOG" id="KOG0885">
    <property type="taxonomic scope" value="Eukaryota"/>
</dbReference>
<dbReference type="HOGENOM" id="CLU_012062_14_4_1"/>
<dbReference type="InParanoid" id="Q6Q152"/>
<dbReference type="OMA" id="CANSGSP"/>
<dbReference type="OrthoDB" id="442970at2759"/>
<dbReference type="PhylomeDB" id="Q6Q152"/>
<dbReference type="PRO" id="PR:Q6Q152"/>
<dbReference type="Proteomes" id="UP000006548">
    <property type="component" value="Chromosome 4"/>
</dbReference>
<dbReference type="ExpressionAtlas" id="Q6Q152">
    <property type="expression patterns" value="baseline and differential"/>
</dbReference>
<dbReference type="GO" id="GO:0005737">
    <property type="term" value="C:cytoplasm"/>
    <property type="evidence" value="ECO:0007669"/>
    <property type="project" value="UniProtKB-SubCell"/>
</dbReference>
<dbReference type="GO" id="GO:0005634">
    <property type="term" value="C:nucleus"/>
    <property type="evidence" value="ECO:0007669"/>
    <property type="project" value="UniProtKB-SubCell"/>
</dbReference>
<dbReference type="GO" id="GO:0009506">
    <property type="term" value="C:plasmodesma"/>
    <property type="evidence" value="ECO:0007005"/>
    <property type="project" value="TAIR"/>
</dbReference>
<dbReference type="GO" id="GO:0003755">
    <property type="term" value="F:peptidyl-prolyl cis-trans isomerase activity"/>
    <property type="evidence" value="ECO:0007669"/>
    <property type="project" value="UniProtKB-KW"/>
</dbReference>
<dbReference type="GO" id="GO:0006457">
    <property type="term" value="P:protein folding"/>
    <property type="evidence" value="ECO:0007669"/>
    <property type="project" value="InterPro"/>
</dbReference>
<dbReference type="CDD" id="cd01925">
    <property type="entry name" value="cyclophilin_CeCYP16-like"/>
    <property type="match status" value="1"/>
</dbReference>
<dbReference type="FunFam" id="2.40.100.10:FF:000007">
    <property type="entry name" value="Peptidyl-prolyl cis-trans isomerase CWC27 homolog"/>
    <property type="match status" value="1"/>
</dbReference>
<dbReference type="Gene3D" id="2.40.100.10">
    <property type="entry name" value="Cyclophilin-like"/>
    <property type="match status" value="1"/>
</dbReference>
<dbReference type="InterPro" id="IPR029000">
    <property type="entry name" value="Cyclophilin-like_dom_sf"/>
</dbReference>
<dbReference type="InterPro" id="IPR020892">
    <property type="entry name" value="Cyclophilin-type_PPIase_CS"/>
</dbReference>
<dbReference type="InterPro" id="IPR002130">
    <property type="entry name" value="Cyclophilin-type_PPIase_dom"/>
</dbReference>
<dbReference type="InterPro" id="IPR044666">
    <property type="entry name" value="Cyclophilin_A-like"/>
</dbReference>
<dbReference type="PANTHER" id="PTHR45625">
    <property type="entry name" value="PEPTIDYL-PROLYL CIS-TRANS ISOMERASE-RELATED"/>
    <property type="match status" value="1"/>
</dbReference>
<dbReference type="PANTHER" id="PTHR45625:SF6">
    <property type="entry name" value="SPLICEOSOME-ASSOCIATED PROTEIN CWC27 HOMOLOG"/>
    <property type="match status" value="1"/>
</dbReference>
<dbReference type="Pfam" id="PF00160">
    <property type="entry name" value="Pro_isomerase"/>
    <property type="match status" value="1"/>
</dbReference>
<dbReference type="PRINTS" id="PR00153">
    <property type="entry name" value="CSAPPISMRASE"/>
</dbReference>
<dbReference type="SUPFAM" id="SSF50891">
    <property type="entry name" value="Cyclophilin-like"/>
    <property type="match status" value="1"/>
</dbReference>
<dbReference type="PROSITE" id="PS00170">
    <property type="entry name" value="CSA_PPIASE_1"/>
    <property type="match status" value="1"/>
</dbReference>
<dbReference type="PROSITE" id="PS50072">
    <property type="entry name" value="CSA_PPIASE_2"/>
    <property type="match status" value="1"/>
</dbReference>
<comment type="function">
    <text evidence="1 7">PPIases accelerate the folding of proteins. It catalyzes the cis-trans isomerization of proline imidic peptide bonds in oligopeptides (By similarity). Involved in plant response to pathogen infection by increasing PAD4 expression in absence of EDS1 up-regulation.</text>
</comment>
<comment type="catalytic activity">
    <reaction>
        <text>[protein]-peptidylproline (omega=180) = [protein]-peptidylproline (omega=0)</text>
        <dbReference type="Rhea" id="RHEA:16237"/>
        <dbReference type="Rhea" id="RHEA-COMP:10747"/>
        <dbReference type="Rhea" id="RHEA-COMP:10748"/>
        <dbReference type="ChEBI" id="CHEBI:83833"/>
        <dbReference type="ChEBI" id="CHEBI:83834"/>
        <dbReference type="EC" id="5.2.1.8"/>
    </reaction>
</comment>
<comment type="subcellular location">
    <subcellularLocation>
        <location evidence="7">Nucleus</location>
    </subcellularLocation>
    <subcellularLocation>
        <location evidence="7">Cytoplasm</location>
    </subcellularLocation>
</comment>
<comment type="alternative products">
    <event type="alternative splicing"/>
    <isoform>
        <id>Q6Q152-1</id>
        <name>1</name>
        <sequence type="displayed"/>
    </isoform>
    <isoform>
        <id>Q6Q152-2</id>
        <name>2</name>
        <sequence type="described" ref="VSP_055393 VSP_055394"/>
    </isoform>
</comment>
<comment type="tissue specificity">
    <text evidence="5 6">Ubiquitous.</text>
</comment>
<comment type="induction">
    <text evidence="7">Up-regulated upon pathogen infection.</text>
</comment>
<comment type="disruption phenotype">
    <text evidence="7">Increased susceptibility to P.syringae infection.</text>
</comment>
<comment type="similarity">
    <text evidence="9">Belongs to the cyclophilin-type PPIase family.</text>
</comment>
<comment type="sequence caution" evidence="9">
    <conflict type="erroneous gene model prediction">
        <sequence resource="EMBL-CDS" id="CAA21215"/>
    </conflict>
</comment>
<comment type="sequence caution" evidence="9">
    <conflict type="erroneous gene model prediction">
        <sequence resource="EMBL-CDS" id="CAB80023"/>
    </conflict>
</comment>
<sequence>MSTVYVLEPPTKGKVIVNTTHGPIDVELWPKEAPKSVRNFVQLCLEGYFDNTIFHRVIPGFLVQGGDPTGSGTGGDSIYGGVFADEFHSRLRFSHRGIVAMANASSPNSNGSQFFFTLDKCDWLDKKHTIFGKVTGDSIYNLLRLGEVDTSKDDRPLDPAPKILSVEVLWNPFEDIVPRVLAKTSEESAAEIKEPPTKPVKKLNLLSFGEEAEEEEKELAVVKQKIKSSHDVLNDPRLLKAEASDKERNASESKEVLSVREALNAKKEAAQKDKSFSVSDTVGNSDDDDDGEDETKFDAKMRNQVLSRRKEIGDTPSKPTQKKKSSSLKGREESTQRSDAVSSEDEKPRMEKLSLKKKGIGSEAKAEHMEKGDTDLQLYNASERARQLHKLKKRRLQGNEDSVLAKLEKFKQSISAKPFTSSNEPVVLTSSSEPVDNKEEDLSDWKNVKLKFAPERGKDKMSRRDDPDAYMVVDPLLEKGKEKFNRMQAKQKRREREWSGKSLA</sequence>
<name>CPY57_ARATH</name>
<feature type="initiator methionine" description="Removed" evidence="10">
    <location>
        <position position="1"/>
    </location>
</feature>
<feature type="chain" id="PRO_0000429942" description="Peptidyl-prolyl cis-trans isomerase CYP57">
    <location>
        <begin position="2"/>
        <end position="504"/>
    </location>
</feature>
<feature type="domain" description="PPIase cyclophilin-type" evidence="3">
    <location>
        <begin position="16"/>
        <end position="167"/>
    </location>
</feature>
<feature type="region of interest" description="Disordered" evidence="4">
    <location>
        <begin position="237"/>
        <end position="374"/>
    </location>
</feature>
<feature type="region of interest" description="Disordered" evidence="4">
    <location>
        <begin position="416"/>
        <end position="441"/>
    </location>
</feature>
<feature type="region of interest" description="Disordered" evidence="4">
    <location>
        <begin position="482"/>
        <end position="504"/>
    </location>
</feature>
<feature type="coiled-coil region" evidence="2">
    <location>
        <begin position="204"/>
        <end position="274"/>
    </location>
</feature>
<feature type="compositionally biased region" description="Basic and acidic residues" evidence="4">
    <location>
        <begin position="237"/>
        <end position="275"/>
    </location>
</feature>
<feature type="compositionally biased region" description="Basic and acidic residues" evidence="4">
    <location>
        <begin position="344"/>
        <end position="354"/>
    </location>
</feature>
<feature type="compositionally biased region" description="Basic and acidic residues" evidence="4">
    <location>
        <begin position="364"/>
        <end position="374"/>
    </location>
</feature>
<feature type="compositionally biased region" description="Polar residues" evidence="4">
    <location>
        <begin position="416"/>
        <end position="434"/>
    </location>
</feature>
<feature type="compositionally biased region" description="Basic and acidic residues" evidence="4">
    <location>
        <begin position="494"/>
        <end position="504"/>
    </location>
</feature>
<feature type="modified residue" description="N-acetylserine" evidence="10">
    <location>
        <position position="2"/>
    </location>
</feature>
<feature type="splice variant" id="VSP_055393" description="In isoform 2." evidence="8">
    <original>NASE</original>
    <variation>AKLY</variation>
    <location>
        <begin position="249"/>
        <end position="252"/>
    </location>
</feature>
<feature type="splice variant" id="VSP_055394" description="In isoform 2." evidence="8">
    <location>
        <begin position="253"/>
        <end position="504"/>
    </location>
</feature>
<feature type="sequence conflict" description="In Ref. 5; BAE99301." evidence="9" ref="5">
    <original>P</original>
    <variation>H</variation>
    <location>
        <position position="59"/>
    </location>
</feature>
<keyword id="KW-0007">Acetylation</keyword>
<keyword id="KW-0025">Alternative splicing</keyword>
<keyword id="KW-0143">Chaperone</keyword>
<keyword id="KW-0175">Coiled coil</keyword>
<keyword id="KW-0963">Cytoplasm</keyword>
<keyword id="KW-0413">Isomerase</keyword>
<keyword id="KW-0539">Nucleus</keyword>
<keyword id="KW-1185">Reference proteome</keyword>
<keyword id="KW-0697">Rotamase</keyword>
<protein>
    <recommendedName>
        <fullName>Peptidyl-prolyl cis-trans isomerase CYP57</fullName>
        <shortName>PPIase CYP57</shortName>
        <ecNumber>5.2.1.8</ecNumber>
    </recommendedName>
    <alternativeName>
        <fullName>Cyclophilin of 57 kDa</fullName>
    </alternativeName>
    <alternativeName>
        <fullName>Cyclophilin-57</fullName>
    </alternativeName>
</protein>